<dbReference type="EMBL" id="AE009947">
    <property type="protein sequence ID" value="AAT44643.1"/>
    <property type="molecule type" value="Genomic_DNA"/>
</dbReference>
<dbReference type="EMBL" id="AE009947">
    <property type="protein sequence ID" value="AAT44666.1"/>
    <property type="molecule type" value="Genomic_DNA"/>
</dbReference>
<dbReference type="SMR" id="Q6L3C6"/>
<dbReference type="GO" id="GO:0009507">
    <property type="term" value="C:chloroplast"/>
    <property type="evidence" value="ECO:0007669"/>
    <property type="project" value="UniProtKB-SubCell"/>
</dbReference>
<dbReference type="GO" id="GO:0015935">
    <property type="term" value="C:small ribosomal subunit"/>
    <property type="evidence" value="ECO:0007669"/>
    <property type="project" value="InterPro"/>
</dbReference>
<dbReference type="GO" id="GO:0019843">
    <property type="term" value="F:rRNA binding"/>
    <property type="evidence" value="ECO:0007669"/>
    <property type="project" value="UniProtKB-UniRule"/>
</dbReference>
<dbReference type="GO" id="GO:0003735">
    <property type="term" value="F:structural constituent of ribosome"/>
    <property type="evidence" value="ECO:0007669"/>
    <property type="project" value="InterPro"/>
</dbReference>
<dbReference type="GO" id="GO:0006412">
    <property type="term" value="P:translation"/>
    <property type="evidence" value="ECO:0007669"/>
    <property type="project" value="UniProtKB-UniRule"/>
</dbReference>
<dbReference type="CDD" id="cd14871">
    <property type="entry name" value="uS7_Chloroplast"/>
    <property type="match status" value="1"/>
</dbReference>
<dbReference type="FunFam" id="1.10.455.10:FF:000001">
    <property type="entry name" value="30S ribosomal protein S7"/>
    <property type="match status" value="1"/>
</dbReference>
<dbReference type="Gene3D" id="1.10.455.10">
    <property type="entry name" value="Ribosomal protein S7 domain"/>
    <property type="match status" value="1"/>
</dbReference>
<dbReference type="HAMAP" id="MF_00480_B">
    <property type="entry name" value="Ribosomal_uS7_B"/>
    <property type="match status" value="1"/>
</dbReference>
<dbReference type="InterPro" id="IPR000235">
    <property type="entry name" value="Ribosomal_uS7"/>
</dbReference>
<dbReference type="InterPro" id="IPR005717">
    <property type="entry name" value="Ribosomal_uS7_bac/org-type"/>
</dbReference>
<dbReference type="InterPro" id="IPR020606">
    <property type="entry name" value="Ribosomal_uS7_CS"/>
</dbReference>
<dbReference type="InterPro" id="IPR023798">
    <property type="entry name" value="Ribosomal_uS7_dom"/>
</dbReference>
<dbReference type="InterPro" id="IPR036823">
    <property type="entry name" value="Ribosomal_uS7_dom_sf"/>
</dbReference>
<dbReference type="NCBIfam" id="TIGR01029">
    <property type="entry name" value="rpsG_bact"/>
    <property type="match status" value="1"/>
</dbReference>
<dbReference type="PANTHER" id="PTHR11205">
    <property type="entry name" value="RIBOSOMAL PROTEIN S7"/>
    <property type="match status" value="1"/>
</dbReference>
<dbReference type="Pfam" id="PF00177">
    <property type="entry name" value="Ribosomal_S7"/>
    <property type="match status" value="1"/>
</dbReference>
<dbReference type="PIRSF" id="PIRSF002122">
    <property type="entry name" value="RPS7p_RPS7a_RPS5e_RPS7o"/>
    <property type="match status" value="1"/>
</dbReference>
<dbReference type="SUPFAM" id="SSF47973">
    <property type="entry name" value="Ribosomal protein S7"/>
    <property type="match status" value="1"/>
</dbReference>
<dbReference type="PROSITE" id="PS00052">
    <property type="entry name" value="RIBOSOMAL_S7"/>
    <property type="match status" value="1"/>
</dbReference>
<feature type="chain" id="PRO_0000124496" description="Small ribosomal subunit protein uS7cz/uS7cy">
    <location>
        <begin position="1"/>
        <end position="156"/>
    </location>
</feature>
<name>RR7_SACHY</name>
<keyword id="KW-0150">Chloroplast</keyword>
<keyword id="KW-0934">Plastid</keyword>
<keyword id="KW-0687">Ribonucleoprotein</keyword>
<keyword id="KW-0689">Ribosomal protein</keyword>
<keyword id="KW-0694">RNA-binding</keyword>
<keyword id="KW-0699">rRNA-binding</keyword>
<proteinExistence type="inferred from homology"/>
<comment type="function">
    <text evidence="1">One of the primary rRNA binding proteins, it binds directly to 16S rRNA where it nucleates assembly of the head domain of the 30S subunit.</text>
</comment>
<comment type="subunit">
    <text>Part of the 30S ribosomal subunit.</text>
</comment>
<comment type="subcellular location">
    <subcellularLocation>
        <location>Plastid</location>
        <location>Chloroplast</location>
    </subcellularLocation>
</comment>
<comment type="similarity">
    <text evidence="3">Belongs to the universal ribosomal protein uS7 family.</text>
</comment>
<evidence type="ECO:0000250" key="1"/>
<evidence type="ECO:0000255" key="2">
    <source>
        <dbReference type="HAMAP-Rule" id="MF_00480"/>
    </source>
</evidence>
<evidence type="ECO:0000305" key="3"/>
<gene>
    <name type="primary">rps7-A</name>
    <name type="ordered locus">PS021</name>
</gene>
<gene>
    <name type="primary">rps7-B</name>
    <name type="ordered locus">PS065</name>
</gene>
<geneLocation type="chloroplast"/>
<reference key="1">
    <citation type="journal article" date="2004" name="Curr. Genet.">
        <title>Structural features and transcript-editing analysis of sugarcane (Saccharum officinarum L.) chloroplast genome.</title>
        <authorList>
            <person name="Calsa T. Jr."/>
            <person name="Carraro D.M."/>
            <person name="Benatti M.R."/>
            <person name="Barbosa A.C."/>
            <person name="Kitajima J.P."/>
            <person name="Carrer H."/>
        </authorList>
    </citation>
    <scope>NUCLEOTIDE SEQUENCE [LARGE SCALE GENOMIC DNA]</scope>
    <source>
        <strain>cv. SP-80-3280</strain>
    </source>
</reference>
<accession>Q6L3C6</accession>
<protein>
    <recommendedName>
        <fullName evidence="2">Small ribosomal subunit protein uS7cz/uS7cy</fullName>
    </recommendedName>
    <alternativeName>
        <fullName>30S ribosomal protein S7, chloroplastic</fullName>
    </alternativeName>
</protein>
<sequence length="156" mass="17659">MSRRGTAEKRTAKSDPIFRNRLVNMVVNRIMKDGKKSLAYQILYRAVKKIQQKTETNPLLVLRQAIRRVTPNIGVKTRRNKKGSTRKVPIEIGSKQGRALAIRWLLEASQKRPGRNMAFKLSSELVDAAKGSGGAIRKKEATHRMAEANRALAHFR</sequence>
<organism>
    <name type="scientific">Saccharum hybrid</name>
    <name type="common">Sugarcane</name>
    <dbReference type="NCBI Taxonomy" id="15819"/>
    <lineage>
        <taxon>Eukaryota</taxon>
        <taxon>Viridiplantae</taxon>
        <taxon>Streptophyta</taxon>
        <taxon>Embryophyta</taxon>
        <taxon>Tracheophyta</taxon>
        <taxon>Spermatophyta</taxon>
        <taxon>Magnoliopsida</taxon>
        <taxon>Liliopsida</taxon>
        <taxon>Poales</taxon>
        <taxon>Poaceae</taxon>
        <taxon>PACMAD clade</taxon>
        <taxon>Panicoideae</taxon>
        <taxon>Andropogonodae</taxon>
        <taxon>Andropogoneae</taxon>
        <taxon>Saccharinae</taxon>
        <taxon>Saccharum</taxon>
    </lineage>
</organism>